<organism>
    <name type="scientific">Shewanella baltica (strain OS185)</name>
    <dbReference type="NCBI Taxonomy" id="402882"/>
    <lineage>
        <taxon>Bacteria</taxon>
        <taxon>Pseudomonadati</taxon>
        <taxon>Pseudomonadota</taxon>
        <taxon>Gammaproteobacteria</taxon>
        <taxon>Alteromonadales</taxon>
        <taxon>Shewanellaceae</taxon>
        <taxon>Shewanella</taxon>
    </lineage>
</organism>
<keyword id="KW-0028">Amino-acid biosynthesis</keyword>
<keyword id="KW-0057">Aromatic amino acid biosynthesis</keyword>
<keyword id="KW-0456">Lyase</keyword>
<evidence type="ECO:0000255" key="1">
    <source>
        <dbReference type="HAMAP-Rule" id="MF_00169"/>
    </source>
</evidence>
<dbReference type="EC" id="4.2.1.10" evidence="1"/>
<dbReference type="EMBL" id="CP000753">
    <property type="protein sequence ID" value="ABS09978.1"/>
    <property type="molecule type" value="Genomic_DNA"/>
</dbReference>
<dbReference type="RefSeq" id="WP_011845669.1">
    <property type="nucleotide sequence ID" value="NC_009665.1"/>
</dbReference>
<dbReference type="SMR" id="A6WT39"/>
<dbReference type="KEGG" id="sbm:Shew185_3854"/>
<dbReference type="HOGENOM" id="CLU_090968_1_0_6"/>
<dbReference type="UniPathway" id="UPA00053">
    <property type="reaction ID" value="UER00086"/>
</dbReference>
<dbReference type="GO" id="GO:0003855">
    <property type="term" value="F:3-dehydroquinate dehydratase activity"/>
    <property type="evidence" value="ECO:0007669"/>
    <property type="project" value="UniProtKB-UniRule"/>
</dbReference>
<dbReference type="GO" id="GO:0008652">
    <property type="term" value="P:amino acid biosynthetic process"/>
    <property type="evidence" value="ECO:0007669"/>
    <property type="project" value="UniProtKB-KW"/>
</dbReference>
<dbReference type="GO" id="GO:0009073">
    <property type="term" value="P:aromatic amino acid family biosynthetic process"/>
    <property type="evidence" value="ECO:0007669"/>
    <property type="project" value="UniProtKB-KW"/>
</dbReference>
<dbReference type="GO" id="GO:0009423">
    <property type="term" value="P:chorismate biosynthetic process"/>
    <property type="evidence" value="ECO:0007669"/>
    <property type="project" value="UniProtKB-UniRule"/>
</dbReference>
<dbReference type="GO" id="GO:0019631">
    <property type="term" value="P:quinate catabolic process"/>
    <property type="evidence" value="ECO:0007669"/>
    <property type="project" value="TreeGrafter"/>
</dbReference>
<dbReference type="CDD" id="cd00466">
    <property type="entry name" value="DHQase_II"/>
    <property type="match status" value="1"/>
</dbReference>
<dbReference type="Gene3D" id="3.40.50.9100">
    <property type="entry name" value="Dehydroquinase, class II"/>
    <property type="match status" value="1"/>
</dbReference>
<dbReference type="HAMAP" id="MF_00169">
    <property type="entry name" value="AroQ"/>
    <property type="match status" value="1"/>
</dbReference>
<dbReference type="InterPro" id="IPR001874">
    <property type="entry name" value="DHquinase_II"/>
</dbReference>
<dbReference type="InterPro" id="IPR018509">
    <property type="entry name" value="DHquinase_II_CS"/>
</dbReference>
<dbReference type="InterPro" id="IPR036441">
    <property type="entry name" value="DHquinase_II_sf"/>
</dbReference>
<dbReference type="NCBIfam" id="TIGR01088">
    <property type="entry name" value="aroQ"/>
    <property type="match status" value="1"/>
</dbReference>
<dbReference type="NCBIfam" id="NF003804">
    <property type="entry name" value="PRK05395.1-1"/>
    <property type="match status" value="1"/>
</dbReference>
<dbReference type="NCBIfam" id="NF003805">
    <property type="entry name" value="PRK05395.1-2"/>
    <property type="match status" value="1"/>
</dbReference>
<dbReference type="NCBIfam" id="NF003806">
    <property type="entry name" value="PRK05395.1-3"/>
    <property type="match status" value="1"/>
</dbReference>
<dbReference type="NCBIfam" id="NF003807">
    <property type="entry name" value="PRK05395.1-4"/>
    <property type="match status" value="1"/>
</dbReference>
<dbReference type="PANTHER" id="PTHR21272">
    <property type="entry name" value="CATABOLIC 3-DEHYDROQUINASE"/>
    <property type="match status" value="1"/>
</dbReference>
<dbReference type="PANTHER" id="PTHR21272:SF3">
    <property type="entry name" value="CATABOLIC 3-DEHYDROQUINASE"/>
    <property type="match status" value="1"/>
</dbReference>
<dbReference type="Pfam" id="PF01220">
    <property type="entry name" value="DHquinase_II"/>
    <property type="match status" value="1"/>
</dbReference>
<dbReference type="PIRSF" id="PIRSF001399">
    <property type="entry name" value="DHquinase_II"/>
    <property type="match status" value="1"/>
</dbReference>
<dbReference type="SUPFAM" id="SSF52304">
    <property type="entry name" value="Type II 3-dehydroquinate dehydratase"/>
    <property type="match status" value="1"/>
</dbReference>
<dbReference type="PROSITE" id="PS01029">
    <property type="entry name" value="DEHYDROQUINASE_II"/>
    <property type="match status" value="1"/>
</dbReference>
<gene>
    <name evidence="1" type="primary">aroQ</name>
    <name type="ordered locus">Shew185_3854</name>
</gene>
<sequence length="146" mass="16077">MSHKILLVNGPNLNLLGRREPSVYGHQTLADIVAELKQQAKLAEVELEHIQSNAEFELINAIHATDAQMIIINPAAFTHTSVALRDALLGVAIPFFEVHLSNVHAREAFRHHSYFSDKAIGVICGFGSQGYEFALAAAIKRLNQPQ</sequence>
<reference key="1">
    <citation type="submission" date="2007-07" db="EMBL/GenBank/DDBJ databases">
        <title>Complete sequence of chromosome of Shewanella baltica OS185.</title>
        <authorList>
            <consortium name="US DOE Joint Genome Institute"/>
            <person name="Copeland A."/>
            <person name="Lucas S."/>
            <person name="Lapidus A."/>
            <person name="Barry K."/>
            <person name="Glavina del Rio T."/>
            <person name="Dalin E."/>
            <person name="Tice H."/>
            <person name="Pitluck S."/>
            <person name="Sims D."/>
            <person name="Brettin T."/>
            <person name="Bruce D."/>
            <person name="Detter J.C."/>
            <person name="Han C."/>
            <person name="Schmutz J."/>
            <person name="Larimer F."/>
            <person name="Land M."/>
            <person name="Hauser L."/>
            <person name="Kyrpides N."/>
            <person name="Mikhailova N."/>
            <person name="Brettar I."/>
            <person name="Rodrigues J."/>
            <person name="Konstantinidis K."/>
            <person name="Tiedje J."/>
            <person name="Richardson P."/>
        </authorList>
    </citation>
    <scope>NUCLEOTIDE SEQUENCE [LARGE SCALE GENOMIC DNA]</scope>
    <source>
        <strain>OS185</strain>
    </source>
</reference>
<accession>A6WT39</accession>
<feature type="chain" id="PRO_1000023512" description="3-dehydroquinate dehydratase">
    <location>
        <begin position="1"/>
        <end position="146"/>
    </location>
</feature>
<feature type="active site" description="Proton acceptor" evidence="1">
    <location>
        <position position="24"/>
    </location>
</feature>
<feature type="active site" description="Proton donor" evidence="1">
    <location>
        <position position="99"/>
    </location>
</feature>
<feature type="binding site" evidence="1">
    <location>
        <position position="73"/>
    </location>
    <ligand>
        <name>substrate</name>
    </ligand>
</feature>
<feature type="binding site" evidence="1">
    <location>
        <position position="79"/>
    </location>
    <ligand>
        <name>substrate</name>
    </ligand>
</feature>
<feature type="binding site" evidence="1">
    <location>
        <position position="86"/>
    </location>
    <ligand>
        <name>substrate</name>
    </ligand>
</feature>
<feature type="binding site" evidence="1">
    <location>
        <begin position="100"/>
        <end position="101"/>
    </location>
    <ligand>
        <name>substrate</name>
    </ligand>
</feature>
<feature type="binding site" evidence="1">
    <location>
        <position position="110"/>
    </location>
    <ligand>
        <name>substrate</name>
    </ligand>
</feature>
<feature type="site" description="Transition state stabilizer" evidence="1">
    <location>
        <position position="19"/>
    </location>
</feature>
<protein>
    <recommendedName>
        <fullName evidence="1">3-dehydroquinate dehydratase</fullName>
        <shortName evidence="1">3-dehydroquinase</shortName>
        <ecNumber evidence="1">4.2.1.10</ecNumber>
    </recommendedName>
    <alternativeName>
        <fullName evidence="1">Type II DHQase</fullName>
    </alternativeName>
</protein>
<comment type="function">
    <text evidence="1">Catalyzes a trans-dehydration via an enolate intermediate.</text>
</comment>
<comment type="catalytic activity">
    <reaction evidence="1">
        <text>3-dehydroquinate = 3-dehydroshikimate + H2O</text>
        <dbReference type="Rhea" id="RHEA:21096"/>
        <dbReference type="ChEBI" id="CHEBI:15377"/>
        <dbReference type="ChEBI" id="CHEBI:16630"/>
        <dbReference type="ChEBI" id="CHEBI:32364"/>
        <dbReference type="EC" id="4.2.1.10"/>
    </reaction>
</comment>
<comment type="pathway">
    <text evidence="1">Metabolic intermediate biosynthesis; chorismate biosynthesis; chorismate from D-erythrose 4-phosphate and phosphoenolpyruvate: step 3/7.</text>
</comment>
<comment type="subunit">
    <text evidence="1">Homododecamer.</text>
</comment>
<comment type="similarity">
    <text evidence="1">Belongs to the type-II 3-dehydroquinase family.</text>
</comment>
<proteinExistence type="inferred from homology"/>
<name>AROQ_SHEB8</name>